<proteinExistence type="inferred from homology"/>
<feature type="chain" id="PRO_0000023187" description="Aspartate 1-decarboxylase beta chain" evidence="1">
    <location>
        <begin position="1"/>
        <end position="24"/>
    </location>
</feature>
<feature type="chain" id="PRO_0000023188" description="Aspartate 1-decarboxylase alpha chain" evidence="1">
    <location>
        <begin position="25"/>
        <end position="126"/>
    </location>
</feature>
<feature type="active site" description="Schiff-base intermediate with substrate; via pyruvic acid" evidence="1">
    <location>
        <position position="25"/>
    </location>
</feature>
<feature type="active site" description="Proton donor" evidence="1">
    <location>
        <position position="58"/>
    </location>
</feature>
<feature type="binding site" evidence="1">
    <location>
        <position position="57"/>
    </location>
    <ligand>
        <name>substrate</name>
    </ligand>
</feature>
<feature type="binding site" evidence="1">
    <location>
        <begin position="73"/>
        <end position="75"/>
    </location>
    <ligand>
        <name>substrate</name>
    </ligand>
</feature>
<feature type="modified residue" description="Pyruvic acid (Ser)" evidence="1">
    <location>
        <position position="25"/>
    </location>
</feature>
<gene>
    <name evidence="1" type="primary">panD</name>
    <name type="ordered locus">XAC1787</name>
</gene>
<sequence>MHLSLLKAKIHRATVTHSELNYEGSIAIDGLLLEATGIREFEQVHIWDVTNGARFSTYAIRAEDGSGIMSLNGGAARHVQVGDLIIVAAFASMSEDEAKTFKPNLVYVNAHNAISHTNHSIPTQAA</sequence>
<keyword id="KW-0068">Autocatalytic cleavage</keyword>
<keyword id="KW-0963">Cytoplasm</keyword>
<keyword id="KW-0210">Decarboxylase</keyword>
<keyword id="KW-0456">Lyase</keyword>
<keyword id="KW-0566">Pantothenate biosynthesis</keyword>
<keyword id="KW-0670">Pyruvate</keyword>
<keyword id="KW-0704">Schiff base</keyword>
<keyword id="KW-0865">Zymogen</keyword>
<protein>
    <recommendedName>
        <fullName evidence="1">Aspartate 1-decarboxylase</fullName>
        <ecNumber evidence="1">4.1.1.11</ecNumber>
    </recommendedName>
    <alternativeName>
        <fullName evidence="1">Aspartate alpha-decarboxylase</fullName>
    </alternativeName>
    <component>
        <recommendedName>
            <fullName evidence="1">Aspartate 1-decarboxylase beta chain</fullName>
        </recommendedName>
    </component>
    <component>
        <recommendedName>
            <fullName evidence="1">Aspartate 1-decarboxylase alpha chain</fullName>
        </recommendedName>
    </component>
</protein>
<dbReference type="EC" id="4.1.1.11" evidence="1"/>
<dbReference type="EMBL" id="AE008923">
    <property type="protein sequence ID" value="AAM36650.1"/>
    <property type="molecule type" value="Genomic_DNA"/>
</dbReference>
<dbReference type="RefSeq" id="WP_003481969.1">
    <property type="nucleotide sequence ID" value="NC_003919.1"/>
</dbReference>
<dbReference type="SMR" id="Q8PLK9"/>
<dbReference type="GeneID" id="97211326"/>
<dbReference type="KEGG" id="xac:XAC1787"/>
<dbReference type="eggNOG" id="COG0853">
    <property type="taxonomic scope" value="Bacteria"/>
</dbReference>
<dbReference type="HOGENOM" id="CLU_115305_2_1_6"/>
<dbReference type="UniPathway" id="UPA00028">
    <property type="reaction ID" value="UER00002"/>
</dbReference>
<dbReference type="Proteomes" id="UP000000576">
    <property type="component" value="Chromosome"/>
</dbReference>
<dbReference type="GO" id="GO:0005829">
    <property type="term" value="C:cytosol"/>
    <property type="evidence" value="ECO:0007669"/>
    <property type="project" value="TreeGrafter"/>
</dbReference>
<dbReference type="GO" id="GO:0004068">
    <property type="term" value="F:aspartate 1-decarboxylase activity"/>
    <property type="evidence" value="ECO:0007669"/>
    <property type="project" value="UniProtKB-UniRule"/>
</dbReference>
<dbReference type="GO" id="GO:0006523">
    <property type="term" value="P:alanine biosynthetic process"/>
    <property type="evidence" value="ECO:0007669"/>
    <property type="project" value="InterPro"/>
</dbReference>
<dbReference type="GO" id="GO:0015940">
    <property type="term" value="P:pantothenate biosynthetic process"/>
    <property type="evidence" value="ECO:0007669"/>
    <property type="project" value="UniProtKB-UniRule"/>
</dbReference>
<dbReference type="CDD" id="cd06919">
    <property type="entry name" value="Asp_decarbox"/>
    <property type="match status" value="1"/>
</dbReference>
<dbReference type="Gene3D" id="2.40.40.20">
    <property type="match status" value="1"/>
</dbReference>
<dbReference type="HAMAP" id="MF_00446">
    <property type="entry name" value="PanD"/>
    <property type="match status" value="1"/>
</dbReference>
<dbReference type="InterPro" id="IPR009010">
    <property type="entry name" value="Asp_de-COase-like_dom_sf"/>
</dbReference>
<dbReference type="InterPro" id="IPR003190">
    <property type="entry name" value="Asp_decarbox"/>
</dbReference>
<dbReference type="NCBIfam" id="TIGR00223">
    <property type="entry name" value="panD"/>
    <property type="match status" value="1"/>
</dbReference>
<dbReference type="PANTHER" id="PTHR21012">
    <property type="entry name" value="ASPARTATE 1-DECARBOXYLASE"/>
    <property type="match status" value="1"/>
</dbReference>
<dbReference type="PANTHER" id="PTHR21012:SF0">
    <property type="entry name" value="ASPARTATE 1-DECARBOXYLASE"/>
    <property type="match status" value="1"/>
</dbReference>
<dbReference type="Pfam" id="PF02261">
    <property type="entry name" value="Asp_decarbox"/>
    <property type="match status" value="1"/>
</dbReference>
<dbReference type="PIRSF" id="PIRSF006246">
    <property type="entry name" value="Asp_decarbox"/>
    <property type="match status" value="1"/>
</dbReference>
<dbReference type="SUPFAM" id="SSF50692">
    <property type="entry name" value="ADC-like"/>
    <property type="match status" value="1"/>
</dbReference>
<name>PAND_XANAC</name>
<evidence type="ECO:0000255" key="1">
    <source>
        <dbReference type="HAMAP-Rule" id="MF_00446"/>
    </source>
</evidence>
<reference key="1">
    <citation type="journal article" date="2002" name="Nature">
        <title>Comparison of the genomes of two Xanthomonas pathogens with differing host specificities.</title>
        <authorList>
            <person name="da Silva A.C.R."/>
            <person name="Ferro J.A."/>
            <person name="Reinach F.C."/>
            <person name="Farah C.S."/>
            <person name="Furlan L.R."/>
            <person name="Quaggio R.B."/>
            <person name="Monteiro-Vitorello C.B."/>
            <person name="Van Sluys M.A."/>
            <person name="Almeida N.F. Jr."/>
            <person name="Alves L.M.C."/>
            <person name="do Amaral A.M."/>
            <person name="Bertolini M.C."/>
            <person name="Camargo L.E.A."/>
            <person name="Camarotte G."/>
            <person name="Cannavan F."/>
            <person name="Cardozo J."/>
            <person name="Chambergo F."/>
            <person name="Ciapina L.P."/>
            <person name="Cicarelli R.M.B."/>
            <person name="Coutinho L.L."/>
            <person name="Cursino-Santos J.R."/>
            <person name="El-Dorry H."/>
            <person name="Faria J.B."/>
            <person name="Ferreira A.J.S."/>
            <person name="Ferreira R.C.C."/>
            <person name="Ferro M.I.T."/>
            <person name="Formighieri E.F."/>
            <person name="Franco M.C."/>
            <person name="Greggio C.C."/>
            <person name="Gruber A."/>
            <person name="Katsuyama A.M."/>
            <person name="Kishi L.T."/>
            <person name="Leite R.P."/>
            <person name="Lemos E.G.M."/>
            <person name="Lemos M.V.F."/>
            <person name="Locali E.C."/>
            <person name="Machado M.A."/>
            <person name="Madeira A.M.B.N."/>
            <person name="Martinez-Rossi N.M."/>
            <person name="Martins E.C."/>
            <person name="Meidanis J."/>
            <person name="Menck C.F.M."/>
            <person name="Miyaki C.Y."/>
            <person name="Moon D.H."/>
            <person name="Moreira L.M."/>
            <person name="Novo M.T.M."/>
            <person name="Okura V.K."/>
            <person name="Oliveira M.C."/>
            <person name="Oliveira V.R."/>
            <person name="Pereira H.A."/>
            <person name="Rossi A."/>
            <person name="Sena J.A.D."/>
            <person name="Silva C."/>
            <person name="de Souza R.F."/>
            <person name="Spinola L.A.F."/>
            <person name="Takita M.A."/>
            <person name="Tamura R.E."/>
            <person name="Teixeira E.C."/>
            <person name="Tezza R.I.D."/>
            <person name="Trindade dos Santos M."/>
            <person name="Truffi D."/>
            <person name="Tsai S.M."/>
            <person name="White F.F."/>
            <person name="Setubal J.C."/>
            <person name="Kitajima J.P."/>
        </authorList>
    </citation>
    <scope>NUCLEOTIDE SEQUENCE [LARGE SCALE GENOMIC DNA]</scope>
    <source>
        <strain>306</strain>
    </source>
</reference>
<comment type="function">
    <text evidence="1">Catalyzes the pyruvoyl-dependent decarboxylation of aspartate to produce beta-alanine.</text>
</comment>
<comment type="catalytic activity">
    <reaction evidence="1">
        <text>L-aspartate + H(+) = beta-alanine + CO2</text>
        <dbReference type="Rhea" id="RHEA:19497"/>
        <dbReference type="ChEBI" id="CHEBI:15378"/>
        <dbReference type="ChEBI" id="CHEBI:16526"/>
        <dbReference type="ChEBI" id="CHEBI:29991"/>
        <dbReference type="ChEBI" id="CHEBI:57966"/>
        <dbReference type="EC" id="4.1.1.11"/>
    </reaction>
</comment>
<comment type="cofactor">
    <cofactor evidence="1">
        <name>pyruvate</name>
        <dbReference type="ChEBI" id="CHEBI:15361"/>
    </cofactor>
    <text evidence="1">Binds 1 pyruvoyl group covalently per subunit.</text>
</comment>
<comment type="pathway">
    <text evidence="1">Cofactor biosynthesis; (R)-pantothenate biosynthesis; beta-alanine from L-aspartate: step 1/1.</text>
</comment>
<comment type="subunit">
    <text evidence="1">Heterooctamer of four alpha and four beta subunits.</text>
</comment>
<comment type="subcellular location">
    <subcellularLocation>
        <location evidence="1">Cytoplasm</location>
    </subcellularLocation>
</comment>
<comment type="PTM">
    <text evidence="1">Is synthesized initially as an inactive proenzyme, which is activated by self-cleavage at a specific serine bond to produce a beta-subunit with a hydroxyl group at its C-terminus and an alpha-subunit with a pyruvoyl group at its N-terminus.</text>
</comment>
<comment type="similarity">
    <text evidence="1">Belongs to the PanD family.</text>
</comment>
<accession>Q8PLK9</accession>
<organism>
    <name type="scientific">Xanthomonas axonopodis pv. citri (strain 306)</name>
    <dbReference type="NCBI Taxonomy" id="190486"/>
    <lineage>
        <taxon>Bacteria</taxon>
        <taxon>Pseudomonadati</taxon>
        <taxon>Pseudomonadota</taxon>
        <taxon>Gammaproteobacteria</taxon>
        <taxon>Lysobacterales</taxon>
        <taxon>Lysobacteraceae</taxon>
        <taxon>Xanthomonas</taxon>
    </lineage>
</organism>